<proteinExistence type="evidence at protein level"/>
<accession>D3WAC5</accession>
<dbReference type="EMBL" id="GQ979703">
    <property type="protein sequence ID" value="ADC80082.1"/>
    <property type="molecule type" value="Genomic_DNA"/>
</dbReference>
<dbReference type="RefSeq" id="YP_009613486.1">
    <molecule id="D3WAC5-1"/>
    <property type="nucleotide sequence ID" value="NC_042024.1"/>
</dbReference>
<dbReference type="GeneID" id="40089861"/>
<dbReference type="Proteomes" id="UP000002348">
    <property type="component" value="Segment"/>
</dbReference>
<dbReference type="GO" id="GO:0039620">
    <property type="term" value="C:T=7 icosahedral viral capsid"/>
    <property type="evidence" value="ECO:0000314"/>
    <property type="project" value="UniProtKB"/>
</dbReference>
<dbReference type="InterPro" id="IPR024455">
    <property type="entry name" value="Phage_capsid"/>
</dbReference>
<dbReference type="NCBIfam" id="TIGR01554">
    <property type="entry name" value="major_cap_HK97"/>
    <property type="match status" value="1"/>
</dbReference>
<dbReference type="SUPFAM" id="SSF56563">
    <property type="entry name" value="Major capsid protein gp5"/>
    <property type="match status" value="1"/>
</dbReference>
<comment type="function">
    <text evidence="3">Capsid protein self-assembles to form an icosahedral capsid with a T=7 symmetry, about 69 nm in diameter, and consisting of 60 capsid proteins hexamers and 11 pentamers. The capsid encapsulates the genomic DNA.</text>
</comment>
<comment type="subunit">
    <text evidence="3">Homomultimer.</text>
</comment>
<comment type="subcellular location">
    <subcellularLocation>
        <location evidence="2 3">Virion</location>
    </subcellularLocation>
    <text evidence="2 3">Main component of the capsid.</text>
</comment>
<comment type="alternative products">
    <event type="alternative initiation"/>
    <isoform>
        <id>D3WAC5-1</id>
        <name evidence="2">Capsid protein large</name>
        <sequence type="displayed"/>
    </isoform>
    <isoform>
        <id>D3WAC5-2</id>
        <name evidence="2">Capsid protein short</name>
        <sequence type="described" ref="VSP_058628"/>
    </isoform>
</comment>
<comment type="PTM">
    <text evidence="6">Probably cleaved by the viral protease during maturation.</text>
</comment>
<comment type="similarity">
    <text evidence="5">Belongs to the Skunalikevirus capsid protein family.</text>
</comment>
<keyword id="KW-0024">Alternative initiation</keyword>
<keyword id="KW-0167">Capsid protein</keyword>
<keyword id="KW-0175">Coiled coil</keyword>
<keyword id="KW-1145">T=7 icosahedral capsid protein</keyword>
<keyword id="KW-0946">Virion</keyword>
<name>CAPSD_BPLP2</name>
<protein>
    <recommendedName>
        <fullName evidence="4">Capsid protein</fullName>
    </recommendedName>
    <alternativeName>
        <fullName evidence="5">Gene product 6</fullName>
        <shortName evidence="5">gp6</shortName>
    </alternativeName>
</protein>
<sequence>MNKPDLIEKQNRLAELKENNVSLKSQISGFEVKNAIEDLPKVQELEKTLSENSIEIIKIENELNAQEEKPKGKDKMTNFIESQNAVTEFFDVLKKNSGKSEIKNAWSAKLAENGVTITDTTFQLPRKLVESINTALLNTNPVFKVFHVTNVGALLVSRSFDSANEAQVHKDGQTKTEQAATLTIDTLEPVMVYKLQSLAERVKRLQMSYSELYNLIVAELTQAIVNKIVDLALVEGDGTNGFKSIDKEADVKKIKKITTKAKSAGKTPFADAIEEAVDFVRPTAGRRYLIVKTEDRKALLDELRQATANANVRIKNDDTEIASEVGVDEIIVYTGSKALKPTVLVDQKYHIDMQDLTKVDAFEWKTNSNMILVETLTSGHVETYNAGAVITVS</sequence>
<reference key="1">
    <citation type="submission" date="2010-02" db="EMBL/GenBank/DDBJ databases">
        <title>Complete genomic sequence of Lactococcus lactis phage p2.</title>
        <authorList>
            <person name="Tremblay D.M."/>
            <person name="Deveau H."/>
            <person name="Moineau S."/>
        </authorList>
    </citation>
    <scope>NUCLEOTIDE SEQUENCE [LARGE SCALE GENOMIC DNA]</scope>
</reference>
<reference key="2">
    <citation type="journal article" date="2012" name="Appl. Environ. Microbiol.">
        <title>Involvement of the major capsid protein and two early-expressed phage genes in the activity of the lactococcal abortive infection mechanism AbiT.</title>
        <authorList>
            <person name="Labrie S.J."/>
            <person name="Tremblay D.M."/>
            <person name="Moisan M."/>
            <person name="Villion M."/>
            <person name="Magadan A.H."/>
            <person name="Campanacci V."/>
            <person name="Cambillau C."/>
            <person name="Moineau S."/>
        </authorList>
    </citation>
    <scope>SUBCELLULAR LOCATION</scope>
    <scope>PROTEOLYTIC CLEAVAGE</scope>
    <scope>ALTERNATIVE INITIATION</scope>
</reference>
<reference key="3">
    <citation type="journal article" date="2013" name="J. Virol.">
        <title>Structure, adsorption to host, and infection mechanism of virulent lactococcal phage p2.</title>
        <authorList>
            <person name="Bebeacua C."/>
            <person name="Tremblay D."/>
            <person name="Farenc C."/>
            <person name="Chapot-Chartier M.P."/>
            <person name="Sadovskaya I."/>
            <person name="van Heel M."/>
            <person name="Veesler D."/>
            <person name="Moineau S."/>
            <person name="Cambillau C."/>
        </authorList>
    </citation>
    <scope>STRUCTURE BY ELECTRON MICROSCOPY (13 ANGSTROMS) OF THE CAPSID</scope>
    <scope>FUNCTION</scope>
    <scope>SUBUNIT</scope>
    <scope>SUBCELLULAR LOCATION</scope>
</reference>
<organism>
    <name type="scientific">Lactococcus phage p2</name>
    <name type="common">Lactococcus lactis bacteriophage p2</name>
    <dbReference type="NCBI Taxonomy" id="254252"/>
    <lineage>
        <taxon>Viruses</taxon>
        <taxon>Duplodnaviria</taxon>
        <taxon>Heunggongvirae</taxon>
        <taxon>Uroviricota</taxon>
        <taxon>Caudoviricetes</taxon>
        <taxon>Skunavirus</taxon>
    </lineage>
</organism>
<feature type="chain" id="PRO_0000438231" description="Capsid protein">
    <location>
        <begin position="1"/>
        <end position="393"/>
    </location>
</feature>
<feature type="coiled-coil region" evidence="1">
    <location>
        <begin position="5"/>
        <end position="69"/>
    </location>
</feature>
<feature type="splice variant" id="VSP_058628" description="In isoform Capsid protein short." evidence="2">
    <location>
        <begin position="1"/>
        <end position="75"/>
    </location>
</feature>
<evidence type="ECO:0000255" key="1"/>
<evidence type="ECO:0000269" key="2">
    <source>
    </source>
</evidence>
<evidence type="ECO:0000269" key="3">
    <source>
    </source>
</evidence>
<evidence type="ECO:0000303" key="4">
    <source>
    </source>
</evidence>
<evidence type="ECO:0000305" key="5"/>
<evidence type="ECO:0000305" key="6">
    <source>
    </source>
</evidence>
<organismHost>
    <name type="scientific">Lactococcus lactis</name>
    <dbReference type="NCBI Taxonomy" id="1358"/>
</organismHost>